<reference key="1">
    <citation type="journal article" date="2008" name="J. Bacteriol.">
        <title>The pangenome structure of Escherichia coli: comparative genomic analysis of E. coli commensal and pathogenic isolates.</title>
        <authorList>
            <person name="Rasko D.A."/>
            <person name="Rosovitz M.J."/>
            <person name="Myers G.S.A."/>
            <person name="Mongodin E.F."/>
            <person name="Fricke W.F."/>
            <person name="Gajer P."/>
            <person name="Crabtree J."/>
            <person name="Sebaihia M."/>
            <person name="Thomson N.R."/>
            <person name="Chaudhuri R."/>
            <person name="Henderson I.R."/>
            <person name="Sperandio V."/>
            <person name="Ravel J."/>
        </authorList>
    </citation>
    <scope>NUCLEOTIDE SEQUENCE [LARGE SCALE GENOMIC DNA]</scope>
    <source>
        <strain>E24377A / ETEC</strain>
    </source>
</reference>
<sequence length="456" mass="49190">MLNNAMSVVILAAGKGTRMYSDLPKVLHTLAGKAMVQHVIDAANELGAAHVHLVYGHGGDLLKQALKDDNLNWVLQAEQLGTGHAMQQAAPFFADDEDILMLYGDVPLISVETLQRLRDAKPQGGIGLLTVKLDDPTGYGRITRENGKVTGIVEHKDATDEQRQIQEINTGILIANGADMKRWLAKLTNNNAQGEYYITDIIALAYQEGREIVAVHPQRLSEVEGVNNRLQLSRLERVYQSEQAEKLLLAGVMLRDPARFDLRGTLTHGRDVEIDTNVIIEGNVTLGHRVKIGTGCVIKNSVIGDDCEISPYTVVEDANLAAACTIGPFARLRPGAELLEGAHVGNFVEMKKARLGKGSKAGHLTYLGDAEIGDNVNIGAGTITCNYDGANKFKTIIGDDVFVGSDTQLVAPVTVGKGATIAAGTTVTRNVGENALAISRVPQTQKEGWRRPVKKK</sequence>
<keyword id="KW-0012">Acyltransferase</keyword>
<keyword id="KW-0133">Cell shape</keyword>
<keyword id="KW-0961">Cell wall biogenesis/degradation</keyword>
<keyword id="KW-0963">Cytoplasm</keyword>
<keyword id="KW-0460">Magnesium</keyword>
<keyword id="KW-0479">Metal-binding</keyword>
<keyword id="KW-0511">Multifunctional enzyme</keyword>
<keyword id="KW-0548">Nucleotidyltransferase</keyword>
<keyword id="KW-0573">Peptidoglycan synthesis</keyword>
<keyword id="KW-1185">Reference proteome</keyword>
<keyword id="KW-0677">Repeat</keyword>
<keyword id="KW-0808">Transferase</keyword>
<accession>A7ZTU1</accession>
<name>GLMU_ECO24</name>
<dbReference type="EC" id="2.7.7.23" evidence="1"/>
<dbReference type="EC" id="2.3.1.157" evidence="1"/>
<dbReference type="EMBL" id="CP000800">
    <property type="protein sequence ID" value="ABV19640.1"/>
    <property type="molecule type" value="Genomic_DNA"/>
</dbReference>
<dbReference type="RefSeq" id="WP_000933736.1">
    <property type="nucleotide sequence ID" value="NC_009801.1"/>
</dbReference>
<dbReference type="SMR" id="A7ZTU1"/>
<dbReference type="GeneID" id="75205448"/>
<dbReference type="KEGG" id="ecw:EcE24377A_4245"/>
<dbReference type="HOGENOM" id="CLU_029499_15_2_6"/>
<dbReference type="UniPathway" id="UPA00113">
    <property type="reaction ID" value="UER00532"/>
</dbReference>
<dbReference type="UniPathway" id="UPA00113">
    <property type="reaction ID" value="UER00533"/>
</dbReference>
<dbReference type="UniPathway" id="UPA00973"/>
<dbReference type="Proteomes" id="UP000001122">
    <property type="component" value="Chromosome"/>
</dbReference>
<dbReference type="GO" id="GO:0005737">
    <property type="term" value="C:cytoplasm"/>
    <property type="evidence" value="ECO:0007669"/>
    <property type="project" value="UniProtKB-SubCell"/>
</dbReference>
<dbReference type="GO" id="GO:0016020">
    <property type="term" value="C:membrane"/>
    <property type="evidence" value="ECO:0007669"/>
    <property type="project" value="GOC"/>
</dbReference>
<dbReference type="GO" id="GO:0019134">
    <property type="term" value="F:glucosamine-1-phosphate N-acetyltransferase activity"/>
    <property type="evidence" value="ECO:0007669"/>
    <property type="project" value="UniProtKB-UniRule"/>
</dbReference>
<dbReference type="GO" id="GO:0000287">
    <property type="term" value="F:magnesium ion binding"/>
    <property type="evidence" value="ECO:0007669"/>
    <property type="project" value="UniProtKB-UniRule"/>
</dbReference>
<dbReference type="GO" id="GO:0003977">
    <property type="term" value="F:UDP-N-acetylglucosamine diphosphorylase activity"/>
    <property type="evidence" value="ECO:0007669"/>
    <property type="project" value="UniProtKB-UniRule"/>
</dbReference>
<dbReference type="GO" id="GO:0000902">
    <property type="term" value="P:cell morphogenesis"/>
    <property type="evidence" value="ECO:0007669"/>
    <property type="project" value="UniProtKB-UniRule"/>
</dbReference>
<dbReference type="GO" id="GO:0071555">
    <property type="term" value="P:cell wall organization"/>
    <property type="evidence" value="ECO:0007669"/>
    <property type="project" value="UniProtKB-KW"/>
</dbReference>
<dbReference type="GO" id="GO:0009245">
    <property type="term" value="P:lipid A biosynthetic process"/>
    <property type="evidence" value="ECO:0007669"/>
    <property type="project" value="UniProtKB-UniRule"/>
</dbReference>
<dbReference type="GO" id="GO:0009252">
    <property type="term" value="P:peptidoglycan biosynthetic process"/>
    <property type="evidence" value="ECO:0007669"/>
    <property type="project" value="UniProtKB-UniRule"/>
</dbReference>
<dbReference type="GO" id="GO:0008360">
    <property type="term" value="P:regulation of cell shape"/>
    <property type="evidence" value="ECO:0007669"/>
    <property type="project" value="UniProtKB-KW"/>
</dbReference>
<dbReference type="GO" id="GO:0006048">
    <property type="term" value="P:UDP-N-acetylglucosamine biosynthetic process"/>
    <property type="evidence" value="ECO:0007669"/>
    <property type="project" value="UniProtKB-UniPathway"/>
</dbReference>
<dbReference type="CDD" id="cd02540">
    <property type="entry name" value="GT2_GlmU_N_bac"/>
    <property type="match status" value="1"/>
</dbReference>
<dbReference type="CDD" id="cd03353">
    <property type="entry name" value="LbH_GlmU_C"/>
    <property type="match status" value="1"/>
</dbReference>
<dbReference type="FunFam" id="2.160.10.10:FF:000011">
    <property type="entry name" value="Bifunctional protein GlmU"/>
    <property type="match status" value="1"/>
</dbReference>
<dbReference type="FunFam" id="3.90.550.10:FF:000006">
    <property type="entry name" value="Bifunctional protein GlmU"/>
    <property type="match status" value="1"/>
</dbReference>
<dbReference type="Gene3D" id="2.160.10.10">
    <property type="entry name" value="Hexapeptide repeat proteins"/>
    <property type="match status" value="1"/>
</dbReference>
<dbReference type="Gene3D" id="3.90.550.10">
    <property type="entry name" value="Spore Coat Polysaccharide Biosynthesis Protein SpsA, Chain A"/>
    <property type="match status" value="1"/>
</dbReference>
<dbReference type="HAMAP" id="MF_01631">
    <property type="entry name" value="GlmU"/>
    <property type="match status" value="1"/>
</dbReference>
<dbReference type="InterPro" id="IPR005882">
    <property type="entry name" value="Bifunctional_GlmU"/>
</dbReference>
<dbReference type="InterPro" id="IPR050065">
    <property type="entry name" value="GlmU-like"/>
</dbReference>
<dbReference type="InterPro" id="IPR038009">
    <property type="entry name" value="GlmU_C_LbH"/>
</dbReference>
<dbReference type="InterPro" id="IPR001451">
    <property type="entry name" value="Hexapep"/>
</dbReference>
<dbReference type="InterPro" id="IPR018357">
    <property type="entry name" value="Hexapep_transf_CS"/>
</dbReference>
<dbReference type="InterPro" id="IPR025877">
    <property type="entry name" value="MobA-like_NTP_Trfase"/>
</dbReference>
<dbReference type="InterPro" id="IPR029044">
    <property type="entry name" value="Nucleotide-diphossugar_trans"/>
</dbReference>
<dbReference type="InterPro" id="IPR011004">
    <property type="entry name" value="Trimer_LpxA-like_sf"/>
</dbReference>
<dbReference type="NCBIfam" id="TIGR01173">
    <property type="entry name" value="glmU"/>
    <property type="match status" value="1"/>
</dbReference>
<dbReference type="NCBIfam" id="NF006986">
    <property type="entry name" value="PRK09451.1"/>
    <property type="match status" value="1"/>
</dbReference>
<dbReference type="PANTHER" id="PTHR43584:SF3">
    <property type="entry name" value="BIFUNCTIONAL PROTEIN GLMU"/>
    <property type="match status" value="1"/>
</dbReference>
<dbReference type="PANTHER" id="PTHR43584">
    <property type="entry name" value="NUCLEOTIDYL TRANSFERASE"/>
    <property type="match status" value="1"/>
</dbReference>
<dbReference type="Pfam" id="PF00132">
    <property type="entry name" value="Hexapep"/>
    <property type="match status" value="1"/>
</dbReference>
<dbReference type="Pfam" id="PF12804">
    <property type="entry name" value="NTP_transf_3"/>
    <property type="match status" value="1"/>
</dbReference>
<dbReference type="SUPFAM" id="SSF53448">
    <property type="entry name" value="Nucleotide-diphospho-sugar transferases"/>
    <property type="match status" value="1"/>
</dbReference>
<dbReference type="SUPFAM" id="SSF51161">
    <property type="entry name" value="Trimeric LpxA-like enzymes"/>
    <property type="match status" value="1"/>
</dbReference>
<dbReference type="PROSITE" id="PS00101">
    <property type="entry name" value="HEXAPEP_TRANSFERASES"/>
    <property type="match status" value="1"/>
</dbReference>
<comment type="function">
    <text evidence="1">Catalyzes the last two sequential reactions in the de novo biosynthetic pathway for UDP-N-acetylglucosamine (UDP-GlcNAc). The C-terminal domain catalyzes the transfer of acetyl group from acetyl coenzyme A to glucosamine-1-phosphate (GlcN-1-P) to produce N-acetylglucosamine-1-phosphate (GlcNAc-1-P), which is converted into UDP-GlcNAc by the transfer of uridine 5-monophosphate (from uridine 5-triphosphate), a reaction catalyzed by the N-terminal domain.</text>
</comment>
<comment type="catalytic activity">
    <reaction evidence="1">
        <text>alpha-D-glucosamine 1-phosphate + acetyl-CoA = N-acetyl-alpha-D-glucosamine 1-phosphate + CoA + H(+)</text>
        <dbReference type="Rhea" id="RHEA:13725"/>
        <dbReference type="ChEBI" id="CHEBI:15378"/>
        <dbReference type="ChEBI" id="CHEBI:57287"/>
        <dbReference type="ChEBI" id="CHEBI:57288"/>
        <dbReference type="ChEBI" id="CHEBI:57776"/>
        <dbReference type="ChEBI" id="CHEBI:58516"/>
        <dbReference type="EC" id="2.3.1.157"/>
    </reaction>
</comment>
<comment type="catalytic activity">
    <reaction evidence="1">
        <text>N-acetyl-alpha-D-glucosamine 1-phosphate + UTP + H(+) = UDP-N-acetyl-alpha-D-glucosamine + diphosphate</text>
        <dbReference type="Rhea" id="RHEA:13509"/>
        <dbReference type="ChEBI" id="CHEBI:15378"/>
        <dbReference type="ChEBI" id="CHEBI:33019"/>
        <dbReference type="ChEBI" id="CHEBI:46398"/>
        <dbReference type="ChEBI" id="CHEBI:57705"/>
        <dbReference type="ChEBI" id="CHEBI:57776"/>
        <dbReference type="EC" id="2.7.7.23"/>
    </reaction>
</comment>
<comment type="cofactor">
    <cofactor evidence="1">
        <name>Mg(2+)</name>
        <dbReference type="ChEBI" id="CHEBI:18420"/>
    </cofactor>
    <text evidence="1">Binds 1 Mg(2+) ion per subunit.</text>
</comment>
<comment type="pathway">
    <text evidence="1">Nucleotide-sugar biosynthesis; UDP-N-acetyl-alpha-D-glucosamine biosynthesis; N-acetyl-alpha-D-glucosamine 1-phosphate from alpha-D-glucosamine 6-phosphate (route II): step 2/2.</text>
</comment>
<comment type="pathway">
    <text evidence="1">Nucleotide-sugar biosynthesis; UDP-N-acetyl-alpha-D-glucosamine biosynthesis; UDP-N-acetyl-alpha-D-glucosamine from N-acetyl-alpha-D-glucosamine 1-phosphate: step 1/1.</text>
</comment>
<comment type="pathway">
    <text evidence="1">Bacterial outer membrane biogenesis; LPS lipid A biosynthesis.</text>
</comment>
<comment type="subunit">
    <text evidence="1">Homotrimer.</text>
</comment>
<comment type="subcellular location">
    <subcellularLocation>
        <location evidence="1">Cytoplasm</location>
    </subcellularLocation>
</comment>
<comment type="similarity">
    <text evidence="1">In the N-terminal section; belongs to the N-acetylglucosamine-1-phosphate uridyltransferase family.</text>
</comment>
<comment type="similarity">
    <text evidence="1">In the C-terminal section; belongs to the transferase hexapeptide repeat family.</text>
</comment>
<protein>
    <recommendedName>
        <fullName evidence="1">Bifunctional protein GlmU</fullName>
    </recommendedName>
    <domain>
        <recommendedName>
            <fullName evidence="1">UDP-N-acetylglucosamine pyrophosphorylase</fullName>
            <ecNumber evidence="1">2.7.7.23</ecNumber>
        </recommendedName>
        <alternativeName>
            <fullName evidence="1">N-acetylglucosamine-1-phosphate uridyltransferase</fullName>
        </alternativeName>
    </domain>
    <domain>
        <recommendedName>
            <fullName evidence="1">Glucosamine-1-phosphate N-acetyltransferase</fullName>
            <ecNumber evidence="1">2.3.1.157</ecNumber>
        </recommendedName>
    </domain>
</protein>
<gene>
    <name evidence="1" type="primary">glmU</name>
    <name type="ordered locus">EcE24377A_4245</name>
</gene>
<evidence type="ECO:0000255" key="1">
    <source>
        <dbReference type="HAMAP-Rule" id="MF_01631"/>
    </source>
</evidence>
<organism>
    <name type="scientific">Escherichia coli O139:H28 (strain E24377A / ETEC)</name>
    <dbReference type="NCBI Taxonomy" id="331111"/>
    <lineage>
        <taxon>Bacteria</taxon>
        <taxon>Pseudomonadati</taxon>
        <taxon>Pseudomonadota</taxon>
        <taxon>Gammaproteobacteria</taxon>
        <taxon>Enterobacterales</taxon>
        <taxon>Enterobacteriaceae</taxon>
        <taxon>Escherichia</taxon>
    </lineage>
</organism>
<feature type="chain" id="PRO_1000069730" description="Bifunctional protein GlmU">
    <location>
        <begin position="1"/>
        <end position="456"/>
    </location>
</feature>
<feature type="region of interest" description="Pyrophosphorylase" evidence="1">
    <location>
        <begin position="1"/>
        <end position="229"/>
    </location>
</feature>
<feature type="region of interest" description="Linker" evidence="1">
    <location>
        <begin position="230"/>
        <end position="250"/>
    </location>
</feature>
<feature type="region of interest" description="N-acetyltransferase" evidence="1">
    <location>
        <begin position="251"/>
        <end position="456"/>
    </location>
</feature>
<feature type="active site" description="Proton acceptor" evidence="1">
    <location>
        <position position="363"/>
    </location>
</feature>
<feature type="binding site" evidence="1">
    <location>
        <begin position="11"/>
        <end position="14"/>
    </location>
    <ligand>
        <name>UDP-N-acetyl-alpha-D-glucosamine</name>
        <dbReference type="ChEBI" id="CHEBI:57705"/>
    </ligand>
</feature>
<feature type="binding site" evidence="1">
    <location>
        <position position="25"/>
    </location>
    <ligand>
        <name>UDP-N-acetyl-alpha-D-glucosamine</name>
        <dbReference type="ChEBI" id="CHEBI:57705"/>
    </ligand>
</feature>
<feature type="binding site" evidence="1">
    <location>
        <position position="76"/>
    </location>
    <ligand>
        <name>UDP-N-acetyl-alpha-D-glucosamine</name>
        <dbReference type="ChEBI" id="CHEBI:57705"/>
    </ligand>
</feature>
<feature type="binding site" evidence="1">
    <location>
        <begin position="81"/>
        <end position="82"/>
    </location>
    <ligand>
        <name>UDP-N-acetyl-alpha-D-glucosamine</name>
        <dbReference type="ChEBI" id="CHEBI:57705"/>
    </ligand>
</feature>
<feature type="binding site" evidence="1">
    <location>
        <begin position="103"/>
        <end position="105"/>
    </location>
    <ligand>
        <name>UDP-N-acetyl-alpha-D-glucosamine</name>
        <dbReference type="ChEBI" id="CHEBI:57705"/>
    </ligand>
</feature>
<feature type="binding site" evidence="1">
    <location>
        <position position="105"/>
    </location>
    <ligand>
        <name>Mg(2+)</name>
        <dbReference type="ChEBI" id="CHEBI:18420"/>
    </ligand>
</feature>
<feature type="binding site" evidence="1">
    <location>
        <position position="140"/>
    </location>
    <ligand>
        <name>UDP-N-acetyl-alpha-D-glucosamine</name>
        <dbReference type="ChEBI" id="CHEBI:57705"/>
    </ligand>
</feature>
<feature type="binding site" evidence="1">
    <location>
        <position position="154"/>
    </location>
    <ligand>
        <name>UDP-N-acetyl-alpha-D-glucosamine</name>
        <dbReference type="ChEBI" id="CHEBI:57705"/>
    </ligand>
</feature>
<feature type="binding site" evidence="1">
    <location>
        <position position="169"/>
    </location>
    <ligand>
        <name>UDP-N-acetyl-alpha-D-glucosamine</name>
        <dbReference type="ChEBI" id="CHEBI:57705"/>
    </ligand>
</feature>
<feature type="binding site" evidence="1">
    <location>
        <position position="227"/>
    </location>
    <ligand>
        <name>Mg(2+)</name>
        <dbReference type="ChEBI" id="CHEBI:18420"/>
    </ligand>
</feature>
<feature type="binding site" evidence="1">
    <location>
        <position position="227"/>
    </location>
    <ligand>
        <name>UDP-N-acetyl-alpha-D-glucosamine</name>
        <dbReference type="ChEBI" id="CHEBI:57705"/>
    </ligand>
</feature>
<feature type="binding site" evidence="1">
    <location>
        <position position="333"/>
    </location>
    <ligand>
        <name>UDP-N-acetyl-alpha-D-glucosamine</name>
        <dbReference type="ChEBI" id="CHEBI:57705"/>
    </ligand>
</feature>
<feature type="binding site" evidence="1">
    <location>
        <position position="351"/>
    </location>
    <ligand>
        <name>UDP-N-acetyl-alpha-D-glucosamine</name>
        <dbReference type="ChEBI" id="CHEBI:57705"/>
    </ligand>
</feature>
<feature type="binding site" evidence="1">
    <location>
        <position position="366"/>
    </location>
    <ligand>
        <name>UDP-N-acetyl-alpha-D-glucosamine</name>
        <dbReference type="ChEBI" id="CHEBI:57705"/>
    </ligand>
</feature>
<feature type="binding site" evidence="1">
    <location>
        <position position="377"/>
    </location>
    <ligand>
        <name>UDP-N-acetyl-alpha-D-glucosamine</name>
        <dbReference type="ChEBI" id="CHEBI:57705"/>
    </ligand>
</feature>
<feature type="binding site" evidence="1">
    <location>
        <position position="380"/>
    </location>
    <ligand>
        <name>acetyl-CoA</name>
        <dbReference type="ChEBI" id="CHEBI:57288"/>
    </ligand>
</feature>
<feature type="binding site" evidence="1">
    <location>
        <begin position="386"/>
        <end position="387"/>
    </location>
    <ligand>
        <name>acetyl-CoA</name>
        <dbReference type="ChEBI" id="CHEBI:57288"/>
    </ligand>
</feature>
<feature type="binding site" evidence="1">
    <location>
        <position position="405"/>
    </location>
    <ligand>
        <name>acetyl-CoA</name>
        <dbReference type="ChEBI" id="CHEBI:57288"/>
    </ligand>
</feature>
<feature type="binding site" evidence="1">
    <location>
        <position position="423"/>
    </location>
    <ligand>
        <name>acetyl-CoA</name>
        <dbReference type="ChEBI" id="CHEBI:57288"/>
    </ligand>
</feature>
<feature type="binding site" evidence="1">
    <location>
        <position position="440"/>
    </location>
    <ligand>
        <name>acetyl-CoA</name>
        <dbReference type="ChEBI" id="CHEBI:57288"/>
    </ligand>
</feature>
<proteinExistence type="inferred from homology"/>